<sequence>MSARFGPEDLLACYRRGVFPMADSRDDPRLFLVDPDFRGILPLDAFHIPKRLKRRVCQDPYRVSFDTAFTRVVEACGEPHDNRPNTWINSPIVNLYSALHRQGFAHSVECWDGDQLVGGLYGVSLGGAFFGESMFSRATDASKIALVHLAARLIDRGYVLLDAQFHNPHLTQFGLIEISRDAFKARLKAALKVGADFHGGSDGPAPDQSIGMSSSGGVSDSVTPAGMSSYSGSSLSGMIARSGSFTGSGAVQRITQMS</sequence>
<accession>Q0BZZ7</accession>
<name>LFTR_HYPNA</name>
<reference key="1">
    <citation type="journal article" date="2006" name="J. Bacteriol.">
        <title>Comparative genomic evidence for a close relationship between the dimorphic prosthecate bacteria Hyphomonas neptunium and Caulobacter crescentus.</title>
        <authorList>
            <person name="Badger J.H."/>
            <person name="Hoover T.R."/>
            <person name="Brun Y.V."/>
            <person name="Weiner R.M."/>
            <person name="Laub M.T."/>
            <person name="Alexandre G."/>
            <person name="Mrazek J."/>
            <person name="Ren Q."/>
            <person name="Paulsen I.T."/>
            <person name="Nelson K.E."/>
            <person name="Khouri H.M."/>
            <person name="Radune D."/>
            <person name="Sosa J."/>
            <person name="Dodson R.J."/>
            <person name="Sullivan S.A."/>
            <person name="Rosovitz M.J."/>
            <person name="Madupu R."/>
            <person name="Brinkac L.M."/>
            <person name="Durkin A.S."/>
            <person name="Daugherty S.C."/>
            <person name="Kothari S.P."/>
            <person name="Giglio M.G."/>
            <person name="Zhou L."/>
            <person name="Haft D.H."/>
            <person name="Selengut J.D."/>
            <person name="Davidsen T.M."/>
            <person name="Yang Q."/>
            <person name="Zafar N."/>
            <person name="Ward N.L."/>
        </authorList>
    </citation>
    <scope>NUCLEOTIDE SEQUENCE [LARGE SCALE GENOMIC DNA]</scope>
    <source>
        <strain>ATCC 15444</strain>
    </source>
</reference>
<evidence type="ECO:0000255" key="1">
    <source>
        <dbReference type="HAMAP-Rule" id="MF_00688"/>
    </source>
</evidence>
<evidence type="ECO:0000256" key="2">
    <source>
        <dbReference type="SAM" id="MobiDB-lite"/>
    </source>
</evidence>
<keyword id="KW-0012">Acyltransferase</keyword>
<keyword id="KW-0963">Cytoplasm</keyword>
<keyword id="KW-1185">Reference proteome</keyword>
<keyword id="KW-0808">Transferase</keyword>
<comment type="function">
    <text evidence="1">Functions in the N-end rule pathway of protein degradation where it conjugates Leu, Phe and, less efficiently, Met from aminoacyl-tRNAs to the N-termini of proteins containing an N-terminal arginine or lysine.</text>
</comment>
<comment type="catalytic activity">
    <reaction evidence="1">
        <text>N-terminal L-lysyl-[protein] + L-leucyl-tRNA(Leu) = N-terminal L-leucyl-L-lysyl-[protein] + tRNA(Leu) + H(+)</text>
        <dbReference type="Rhea" id="RHEA:12340"/>
        <dbReference type="Rhea" id="RHEA-COMP:9613"/>
        <dbReference type="Rhea" id="RHEA-COMP:9622"/>
        <dbReference type="Rhea" id="RHEA-COMP:12670"/>
        <dbReference type="Rhea" id="RHEA-COMP:12671"/>
        <dbReference type="ChEBI" id="CHEBI:15378"/>
        <dbReference type="ChEBI" id="CHEBI:65249"/>
        <dbReference type="ChEBI" id="CHEBI:78442"/>
        <dbReference type="ChEBI" id="CHEBI:78494"/>
        <dbReference type="ChEBI" id="CHEBI:133043"/>
        <dbReference type="EC" id="2.3.2.6"/>
    </reaction>
</comment>
<comment type="catalytic activity">
    <reaction evidence="1">
        <text>N-terminal L-arginyl-[protein] + L-leucyl-tRNA(Leu) = N-terminal L-leucyl-L-arginyl-[protein] + tRNA(Leu) + H(+)</text>
        <dbReference type="Rhea" id="RHEA:50416"/>
        <dbReference type="Rhea" id="RHEA-COMP:9613"/>
        <dbReference type="Rhea" id="RHEA-COMP:9622"/>
        <dbReference type="Rhea" id="RHEA-COMP:12672"/>
        <dbReference type="Rhea" id="RHEA-COMP:12673"/>
        <dbReference type="ChEBI" id="CHEBI:15378"/>
        <dbReference type="ChEBI" id="CHEBI:64719"/>
        <dbReference type="ChEBI" id="CHEBI:78442"/>
        <dbReference type="ChEBI" id="CHEBI:78494"/>
        <dbReference type="ChEBI" id="CHEBI:133044"/>
        <dbReference type="EC" id="2.3.2.6"/>
    </reaction>
</comment>
<comment type="catalytic activity">
    <reaction evidence="1">
        <text>L-phenylalanyl-tRNA(Phe) + an N-terminal L-alpha-aminoacyl-[protein] = an N-terminal L-phenylalanyl-L-alpha-aminoacyl-[protein] + tRNA(Phe)</text>
        <dbReference type="Rhea" id="RHEA:43632"/>
        <dbReference type="Rhea" id="RHEA-COMP:9668"/>
        <dbReference type="Rhea" id="RHEA-COMP:9699"/>
        <dbReference type="Rhea" id="RHEA-COMP:10636"/>
        <dbReference type="Rhea" id="RHEA-COMP:10637"/>
        <dbReference type="ChEBI" id="CHEBI:78442"/>
        <dbReference type="ChEBI" id="CHEBI:78531"/>
        <dbReference type="ChEBI" id="CHEBI:78597"/>
        <dbReference type="ChEBI" id="CHEBI:83561"/>
        <dbReference type="EC" id="2.3.2.6"/>
    </reaction>
</comment>
<comment type="subcellular location">
    <subcellularLocation>
        <location evidence="1">Cytoplasm</location>
    </subcellularLocation>
</comment>
<comment type="similarity">
    <text evidence="1">Belongs to the L/F-transferase family.</text>
</comment>
<protein>
    <recommendedName>
        <fullName evidence="1">Leucyl/phenylalanyl-tRNA--protein transferase</fullName>
        <ecNumber evidence="1">2.3.2.6</ecNumber>
    </recommendedName>
    <alternativeName>
        <fullName evidence="1">L/F-transferase</fullName>
    </alternativeName>
    <alternativeName>
        <fullName evidence="1">Leucyltransferase</fullName>
    </alternativeName>
    <alternativeName>
        <fullName evidence="1">Phenyalanyltransferase</fullName>
    </alternativeName>
</protein>
<organism>
    <name type="scientific">Hyphomonas neptunium (strain ATCC 15444)</name>
    <dbReference type="NCBI Taxonomy" id="228405"/>
    <lineage>
        <taxon>Bacteria</taxon>
        <taxon>Pseudomonadati</taxon>
        <taxon>Pseudomonadota</taxon>
        <taxon>Alphaproteobacteria</taxon>
        <taxon>Hyphomonadales</taxon>
        <taxon>Hyphomonadaceae</taxon>
        <taxon>Hyphomonas</taxon>
    </lineage>
</organism>
<proteinExistence type="inferred from homology"/>
<feature type="chain" id="PRO_0000304338" description="Leucyl/phenylalanyl-tRNA--protein transferase">
    <location>
        <begin position="1"/>
        <end position="258"/>
    </location>
</feature>
<feature type="region of interest" description="Disordered" evidence="2">
    <location>
        <begin position="199"/>
        <end position="220"/>
    </location>
</feature>
<feature type="compositionally biased region" description="Low complexity" evidence="2">
    <location>
        <begin position="209"/>
        <end position="220"/>
    </location>
</feature>
<dbReference type="EC" id="2.3.2.6" evidence="1"/>
<dbReference type="EMBL" id="CP000158">
    <property type="protein sequence ID" value="ABI75713.1"/>
    <property type="molecule type" value="Genomic_DNA"/>
</dbReference>
<dbReference type="SMR" id="Q0BZZ7"/>
<dbReference type="STRING" id="228405.HNE_2251"/>
<dbReference type="KEGG" id="hne:HNE_2251"/>
<dbReference type="eggNOG" id="COG2360">
    <property type="taxonomic scope" value="Bacteria"/>
</dbReference>
<dbReference type="HOGENOM" id="CLU_075045_1_0_5"/>
<dbReference type="Proteomes" id="UP000001959">
    <property type="component" value="Chromosome"/>
</dbReference>
<dbReference type="GO" id="GO:0005737">
    <property type="term" value="C:cytoplasm"/>
    <property type="evidence" value="ECO:0007669"/>
    <property type="project" value="UniProtKB-SubCell"/>
</dbReference>
<dbReference type="GO" id="GO:0008914">
    <property type="term" value="F:leucyl-tRNA--protein transferase activity"/>
    <property type="evidence" value="ECO:0007669"/>
    <property type="project" value="UniProtKB-UniRule"/>
</dbReference>
<dbReference type="GO" id="GO:0030163">
    <property type="term" value="P:protein catabolic process"/>
    <property type="evidence" value="ECO:0007669"/>
    <property type="project" value="UniProtKB-UniRule"/>
</dbReference>
<dbReference type="FunFam" id="3.40.630.70:FF:000001">
    <property type="entry name" value="Leucyl/phenylalanyl-tRNA--protein transferase"/>
    <property type="match status" value="1"/>
</dbReference>
<dbReference type="Gene3D" id="3.40.630.70">
    <property type="entry name" value="Leucyl/phenylalanyl-tRNA-protein transferase, C-terminal domain"/>
    <property type="match status" value="1"/>
</dbReference>
<dbReference type="HAMAP" id="MF_00688">
    <property type="entry name" value="Leu_Phe_trans"/>
    <property type="match status" value="1"/>
</dbReference>
<dbReference type="InterPro" id="IPR016181">
    <property type="entry name" value="Acyl_CoA_acyltransferase"/>
</dbReference>
<dbReference type="InterPro" id="IPR004616">
    <property type="entry name" value="Leu/Phe-tRNA_Trfase"/>
</dbReference>
<dbReference type="InterPro" id="IPR042203">
    <property type="entry name" value="Leu/Phe-tRNA_Trfase_C"/>
</dbReference>
<dbReference type="NCBIfam" id="TIGR00667">
    <property type="entry name" value="aat"/>
    <property type="match status" value="1"/>
</dbReference>
<dbReference type="PANTHER" id="PTHR30098">
    <property type="entry name" value="LEUCYL/PHENYLALANYL-TRNA--PROTEIN TRANSFERASE"/>
    <property type="match status" value="1"/>
</dbReference>
<dbReference type="PANTHER" id="PTHR30098:SF2">
    <property type="entry name" value="LEUCYL_PHENYLALANYL-TRNA--PROTEIN TRANSFERASE"/>
    <property type="match status" value="1"/>
</dbReference>
<dbReference type="Pfam" id="PF03588">
    <property type="entry name" value="Leu_Phe_trans"/>
    <property type="match status" value="1"/>
</dbReference>
<dbReference type="SUPFAM" id="SSF55729">
    <property type="entry name" value="Acyl-CoA N-acyltransferases (Nat)"/>
    <property type="match status" value="1"/>
</dbReference>
<gene>
    <name evidence="1" type="primary">aat</name>
    <name type="ordered locus">HNE_2251</name>
</gene>